<name>SYE_CLONN</name>
<feature type="chain" id="PRO_1000001891" description="Glutamate--tRNA ligase">
    <location>
        <begin position="1"/>
        <end position="487"/>
    </location>
</feature>
<feature type="short sequence motif" description="'HIGH' region" evidence="1">
    <location>
        <begin position="12"/>
        <end position="22"/>
    </location>
</feature>
<feature type="short sequence motif" description="'KMSKS' region" evidence="1">
    <location>
        <begin position="249"/>
        <end position="253"/>
    </location>
</feature>
<feature type="binding site" evidence="1">
    <location>
        <position position="252"/>
    </location>
    <ligand>
        <name>ATP</name>
        <dbReference type="ChEBI" id="CHEBI:30616"/>
    </ligand>
</feature>
<organism>
    <name type="scientific">Clostridium novyi (strain NT)</name>
    <dbReference type="NCBI Taxonomy" id="386415"/>
    <lineage>
        <taxon>Bacteria</taxon>
        <taxon>Bacillati</taxon>
        <taxon>Bacillota</taxon>
        <taxon>Clostridia</taxon>
        <taxon>Eubacteriales</taxon>
        <taxon>Clostridiaceae</taxon>
        <taxon>Clostridium</taxon>
    </lineage>
</organism>
<sequence length="487" mass="55711">MSAKEVRTRFAPSPTGYMHVGNLRTALYTYLIAKHENGKFILRIEDTDQGRYVEGAVDVIYKTLEMTGLKHDEGPDVGGPVGPYIQSERKGTYMEYAKELVEKGEAYYCFCDKERLDSLKENSDTFKYDGHCRNLSKEEVEENLKNGVPYVIRQKNPLDGVTTFEDEIYGTISVDNSELEDMILIKSDGLPTYNFANVVDDHLMGITHVVRGNEYLSSAPKYNRLYNAFGWDIPTYVHCPPIMKDAHNKLSKRNGDASFEDLLKKGYLKEAVVNFIALLGWNPGTNQEIFTLEELVKEFDYKNINKSPSIFDTTKLKWMNGEYIKKLSLDEFHKYALPYYEEIFTKEEMETYNLLKLSEQVQTRIEVFTEIPELVAFVKELPNYDISIYSHKKMKTNPENSLVTLEKALPALEALEDWTFDALNDVIYSLVKELEVKNGVVFWPVRTALSGEASSPGGAFELAEILGKKESLRRVRVGIEKLKEAIN</sequence>
<comment type="function">
    <text evidence="1">Catalyzes the attachment of glutamate to tRNA(Glu) in a two-step reaction: glutamate is first activated by ATP to form Glu-AMP and then transferred to the acceptor end of tRNA(Glu).</text>
</comment>
<comment type="catalytic activity">
    <reaction evidence="1">
        <text>tRNA(Glu) + L-glutamate + ATP = L-glutamyl-tRNA(Glu) + AMP + diphosphate</text>
        <dbReference type="Rhea" id="RHEA:23540"/>
        <dbReference type="Rhea" id="RHEA-COMP:9663"/>
        <dbReference type="Rhea" id="RHEA-COMP:9680"/>
        <dbReference type="ChEBI" id="CHEBI:29985"/>
        <dbReference type="ChEBI" id="CHEBI:30616"/>
        <dbReference type="ChEBI" id="CHEBI:33019"/>
        <dbReference type="ChEBI" id="CHEBI:78442"/>
        <dbReference type="ChEBI" id="CHEBI:78520"/>
        <dbReference type="ChEBI" id="CHEBI:456215"/>
        <dbReference type="EC" id="6.1.1.17"/>
    </reaction>
</comment>
<comment type="subunit">
    <text evidence="1">Monomer.</text>
</comment>
<comment type="subcellular location">
    <subcellularLocation>
        <location evidence="1">Cytoplasm</location>
    </subcellularLocation>
</comment>
<comment type="similarity">
    <text evidence="1">Belongs to the class-I aminoacyl-tRNA synthetase family. Glutamate--tRNA ligase type 1 subfamily.</text>
</comment>
<dbReference type="EC" id="6.1.1.17" evidence="1"/>
<dbReference type="EMBL" id="CP000382">
    <property type="protein sequence ID" value="ABK60359.1"/>
    <property type="molecule type" value="Genomic_DNA"/>
</dbReference>
<dbReference type="RefSeq" id="WP_011721702.1">
    <property type="nucleotide sequence ID" value="NC_008593.1"/>
</dbReference>
<dbReference type="SMR" id="A0PZ93"/>
<dbReference type="STRING" id="386415.NT01CX_1614"/>
<dbReference type="KEGG" id="cno:NT01CX_1614"/>
<dbReference type="eggNOG" id="COG0008">
    <property type="taxonomic scope" value="Bacteria"/>
</dbReference>
<dbReference type="HOGENOM" id="CLU_015768_6_3_9"/>
<dbReference type="Proteomes" id="UP000008220">
    <property type="component" value="Chromosome"/>
</dbReference>
<dbReference type="GO" id="GO:0005829">
    <property type="term" value="C:cytosol"/>
    <property type="evidence" value="ECO:0007669"/>
    <property type="project" value="TreeGrafter"/>
</dbReference>
<dbReference type="GO" id="GO:0005524">
    <property type="term" value="F:ATP binding"/>
    <property type="evidence" value="ECO:0007669"/>
    <property type="project" value="UniProtKB-UniRule"/>
</dbReference>
<dbReference type="GO" id="GO:0004818">
    <property type="term" value="F:glutamate-tRNA ligase activity"/>
    <property type="evidence" value="ECO:0007669"/>
    <property type="project" value="UniProtKB-UniRule"/>
</dbReference>
<dbReference type="GO" id="GO:0000049">
    <property type="term" value="F:tRNA binding"/>
    <property type="evidence" value="ECO:0007669"/>
    <property type="project" value="InterPro"/>
</dbReference>
<dbReference type="GO" id="GO:0008270">
    <property type="term" value="F:zinc ion binding"/>
    <property type="evidence" value="ECO:0007669"/>
    <property type="project" value="InterPro"/>
</dbReference>
<dbReference type="GO" id="GO:0006424">
    <property type="term" value="P:glutamyl-tRNA aminoacylation"/>
    <property type="evidence" value="ECO:0007669"/>
    <property type="project" value="UniProtKB-UniRule"/>
</dbReference>
<dbReference type="CDD" id="cd00808">
    <property type="entry name" value="GluRS_core"/>
    <property type="match status" value="1"/>
</dbReference>
<dbReference type="FunFam" id="3.40.50.620:FF:000045">
    <property type="entry name" value="Glutamate--tRNA ligase, mitochondrial"/>
    <property type="match status" value="1"/>
</dbReference>
<dbReference type="Gene3D" id="1.10.10.350">
    <property type="match status" value="1"/>
</dbReference>
<dbReference type="Gene3D" id="3.40.50.620">
    <property type="entry name" value="HUPs"/>
    <property type="match status" value="1"/>
</dbReference>
<dbReference type="HAMAP" id="MF_00022">
    <property type="entry name" value="Glu_tRNA_synth_type1"/>
    <property type="match status" value="1"/>
</dbReference>
<dbReference type="InterPro" id="IPR045462">
    <property type="entry name" value="aa-tRNA-synth_I_cd-bd"/>
</dbReference>
<dbReference type="InterPro" id="IPR020751">
    <property type="entry name" value="aa-tRNA-synth_I_codon-bd_sub2"/>
</dbReference>
<dbReference type="InterPro" id="IPR001412">
    <property type="entry name" value="aa-tRNA-synth_I_CS"/>
</dbReference>
<dbReference type="InterPro" id="IPR008925">
    <property type="entry name" value="aa_tRNA-synth_I_cd-bd_sf"/>
</dbReference>
<dbReference type="InterPro" id="IPR004527">
    <property type="entry name" value="Glu-tRNA-ligase_bac/mito"/>
</dbReference>
<dbReference type="InterPro" id="IPR000924">
    <property type="entry name" value="Glu/Gln-tRNA-synth"/>
</dbReference>
<dbReference type="InterPro" id="IPR020058">
    <property type="entry name" value="Glu/Gln-tRNA-synth_Ib_cat-dom"/>
</dbReference>
<dbReference type="InterPro" id="IPR049940">
    <property type="entry name" value="GluQ/Sye"/>
</dbReference>
<dbReference type="InterPro" id="IPR033910">
    <property type="entry name" value="GluRS_core"/>
</dbReference>
<dbReference type="InterPro" id="IPR014729">
    <property type="entry name" value="Rossmann-like_a/b/a_fold"/>
</dbReference>
<dbReference type="NCBIfam" id="TIGR00464">
    <property type="entry name" value="gltX_bact"/>
    <property type="match status" value="1"/>
</dbReference>
<dbReference type="PANTHER" id="PTHR43311">
    <property type="entry name" value="GLUTAMATE--TRNA LIGASE"/>
    <property type="match status" value="1"/>
</dbReference>
<dbReference type="PANTHER" id="PTHR43311:SF2">
    <property type="entry name" value="GLUTAMATE--TRNA LIGASE, MITOCHONDRIAL-RELATED"/>
    <property type="match status" value="1"/>
</dbReference>
<dbReference type="Pfam" id="PF19269">
    <property type="entry name" value="Anticodon_2"/>
    <property type="match status" value="1"/>
</dbReference>
<dbReference type="Pfam" id="PF00749">
    <property type="entry name" value="tRNA-synt_1c"/>
    <property type="match status" value="1"/>
</dbReference>
<dbReference type="PRINTS" id="PR00987">
    <property type="entry name" value="TRNASYNTHGLU"/>
</dbReference>
<dbReference type="SUPFAM" id="SSF48163">
    <property type="entry name" value="An anticodon-binding domain of class I aminoacyl-tRNA synthetases"/>
    <property type="match status" value="1"/>
</dbReference>
<dbReference type="SUPFAM" id="SSF52374">
    <property type="entry name" value="Nucleotidylyl transferase"/>
    <property type="match status" value="1"/>
</dbReference>
<dbReference type="PROSITE" id="PS00178">
    <property type="entry name" value="AA_TRNA_LIGASE_I"/>
    <property type="match status" value="1"/>
</dbReference>
<proteinExistence type="inferred from homology"/>
<reference key="1">
    <citation type="journal article" date="2006" name="Nat. Biotechnol.">
        <title>The genome and transcriptomes of the anti-tumor agent Clostridium novyi-NT.</title>
        <authorList>
            <person name="Bettegowda C."/>
            <person name="Huang X."/>
            <person name="Lin J."/>
            <person name="Cheong I."/>
            <person name="Kohli M."/>
            <person name="Szabo S.A."/>
            <person name="Zhang X."/>
            <person name="Diaz L.A. Jr."/>
            <person name="Velculescu V.E."/>
            <person name="Parmigiani G."/>
            <person name="Kinzler K.W."/>
            <person name="Vogelstein B."/>
            <person name="Zhou S."/>
        </authorList>
    </citation>
    <scope>NUCLEOTIDE SEQUENCE [LARGE SCALE GENOMIC DNA]</scope>
    <source>
        <strain>NT</strain>
    </source>
</reference>
<keyword id="KW-0030">Aminoacyl-tRNA synthetase</keyword>
<keyword id="KW-0067">ATP-binding</keyword>
<keyword id="KW-0963">Cytoplasm</keyword>
<keyword id="KW-0436">Ligase</keyword>
<keyword id="KW-0547">Nucleotide-binding</keyword>
<keyword id="KW-0648">Protein biosynthesis</keyword>
<keyword id="KW-1185">Reference proteome</keyword>
<gene>
    <name evidence="1" type="primary">gltX</name>
    <name type="ordered locus">NT01CX_1614</name>
</gene>
<protein>
    <recommendedName>
        <fullName evidence="1">Glutamate--tRNA ligase</fullName>
        <ecNumber evidence="1">6.1.1.17</ecNumber>
    </recommendedName>
    <alternativeName>
        <fullName evidence="1">Glutamyl-tRNA synthetase</fullName>
        <shortName evidence="1">GluRS</shortName>
    </alternativeName>
</protein>
<accession>A0PZ93</accession>
<evidence type="ECO:0000255" key="1">
    <source>
        <dbReference type="HAMAP-Rule" id="MF_00022"/>
    </source>
</evidence>